<sequence>MINMDVIIHKIHQLTPSIRAFELISANGSDLPAFDAGSHIDVHLKNGLTRQYSLSNCCSEQHRYVIGVLHDENSRGGSRCIHQDYREGDHLNIGTPRNLFEIHSKTQKAVLFAGGIGITPILSMAYRLKHQQIPFELHYFVRSHEMIAFYGNLTEHFPEQIHFHIQNQSETQCEMSKVLEEVAPDRHLYVCGPAGFMQFVMDSAQQAGWSDEQLHQEHFVAPQIDQSQNEAFTIEVLGSDRKIEVSAHQTATQALLEHGFDVPVSCEQGICGTCITRVVSGTPDHRDVFMTDEEHALNDQFTPCCSRAKSKILVIDLA</sequence>
<feature type="chain" id="PRO_0000189401" description="Vanillate O-demethylase oxidoreductase">
    <location>
        <begin position="1"/>
        <end position="318"/>
    </location>
</feature>
<feature type="domain" description="FAD-binding FR-type" evidence="3">
    <location>
        <begin position="1"/>
        <end position="103"/>
    </location>
</feature>
<feature type="domain" description="2Fe-2S ferredoxin-type" evidence="2">
    <location>
        <begin position="232"/>
        <end position="318"/>
    </location>
</feature>
<feature type="binding site">
    <location>
        <begin position="1"/>
        <end position="97"/>
    </location>
    <ligand>
        <name>FMN</name>
        <dbReference type="ChEBI" id="CHEBI:58210"/>
    </ligand>
</feature>
<feature type="binding site">
    <location>
        <begin position="107"/>
        <end position="220"/>
    </location>
    <ligand>
        <name>NAD(+)</name>
        <dbReference type="ChEBI" id="CHEBI:57540"/>
    </ligand>
</feature>
<feature type="binding site" evidence="2">
    <location>
        <position position="266"/>
    </location>
    <ligand>
        <name>[2Fe-2S] cluster</name>
        <dbReference type="ChEBI" id="CHEBI:190135"/>
    </ligand>
</feature>
<feature type="binding site" evidence="2">
    <location>
        <position position="271"/>
    </location>
    <ligand>
        <name>[2Fe-2S] cluster</name>
        <dbReference type="ChEBI" id="CHEBI:190135"/>
    </ligand>
</feature>
<feature type="binding site" evidence="2">
    <location>
        <position position="274"/>
    </location>
    <ligand>
        <name>[2Fe-2S] cluster</name>
        <dbReference type="ChEBI" id="CHEBI:190135"/>
    </ligand>
</feature>
<feature type="binding site" evidence="2">
    <location>
        <position position="304"/>
    </location>
    <ligand>
        <name>[2Fe-2S] cluster</name>
        <dbReference type="ChEBI" id="CHEBI:190135"/>
    </ligand>
</feature>
<comment type="cofactor">
    <cofactor evidence="1">
        <name>FMN</name>
        <dbReference type="ChEBI" id="CHEBI:58210"/>
    </cofactor>
</comment>
<comment type="pathway">
    <text>Xenobiotic degradation; vanillyl-alcohol degradation.</text>
</comment>
<comment type="subunit">
    <text>This demethylase system consists of two proteins: an oxygenase and an oxygenase reductase.</text>
</comment>
<comment type="similarity">
    <text evidence="4">Belongs to the PDR/VanB family.</text>
</comment>
<evidence type="ECO:0000250" key="1"/>
<evidence type="ECO:0000255" key="2">
    <source>
        <dbReference type="PROSITE-ProRule" id="PRU00465"/>
    </source>
</evidence>
<evidence type="ECO:0000255" key="3">
    <source>
        <dbReference type="PROSITE-ProRule" id="PRU00716"/>
    </source>
</evidence>
<evidence type="ECO:0000305" key="4"/>
<keyword id="KW-0001">2Fe-2S</keyword>
<keyword id="KW-0058">Aromatic hydrocarbons catabolism</keyword>
<keyword id="KW-0249">Electron transport</keyword>
<keyword id="KW-0285">Flavoprotein</keyword>
<keyword id="KW-0288">FMN</keyword>
<keyword id="KW-0408">Iron</keyword>
<keyword id="KW-0411">Iron-sulfur</keyword>
<keyword id="KW-0439">Lignin degradation</keyword>
<keyword id="KW-0479">Metal-binding</keyword>
<keyword id="KW-0520">NAD</keyword>
<keyword id="KW-0560">Oxidoreductase</keyword>
<keyword id="KW-0813">Transport</keyword>
<reference key="1">
    <citation type="journal article" date="1999" name="J. Bacteriol.">
        <title>Genetic analysis of a chromosomal region containing vanA and vanB, genes required for conversion of either ferulate or vanillate to protocatechuate in Acinetobacter.</title>
        <authorList>
            <person name="Segura A."/>
            <person name="Bunz P.V."/>
            <person name="D'Argenio D.A."/>
            <person name="Ornston L.N."/>
        </authorList>
    </citation>
    <scope>NUCLEOTIDE SEQUENCE [GENOMIC DNA]</scope>
</reference>
<reference key="2">
    <citation type="journal article" date="2004" name="Nucleic Acids Res.">
        <title>Unique features revealed by the genome sequence of Acinetobacter sp. ADP1, a versatile and naturally transformation competent bacterium.</title>
        <authorList>
            <person name="Barbe V."/>
            <person name="Vallenet D."/>
            <person name="Fonknechten N."/>
            <person name="Kreimeyer A."/>
            <person name="Oztas S."/>
            <person name="Labarre L."/>
            <person name="Cruveiller S."/>
            <person name="Robert C."/>
            <person name="Duprat S."/>
            <person name="Wincker P."/>
            <person name="Ornston L.N."/>
            <person name="Weissenbach J."/>
            <person name="Marliere P."/>
            <person name="Cohen G.N."/>
            <person name="Medigue C."/>
        </authorList>
    </citation>
    <scope>NUCLEOTIDE SEQUENCE [LARGE SCALE GENOMIC DNA]</scope>
    <source>
        <strain>ATCC 33305 / BD413 / ADP1</strain>
    </source>
</reference>
<accession>O24840</accession>
<dbReference type="EC" id="1.14.13.-"/>
<dbReference type="EMBL" id="AF009672">
    <property type="protein sequence ID" value="AAC27106.1"/>
    <property type="molecule type" value="Genomic_DNA"/>
</dbReference>
<dbReference type="EMBL" id="CR543861">
    <property type="protein sequence ID" value="CAG67871.1"/>
    <property type="molecule type" value="Genomic_DNA"/>
</dbReference>
<dbReference type="SMR" id="O24840"/>
<dbReference type="STRING" id="202950.GCA_001485005_01380"/>
<dbReference type="KEGG" id="aci:ACIAD0979"/>
<dbReference type="eggNOG" id="COG1018">
    <property type="taxonomic scope" value="Bacteria"/>
</dbReference>
<dbReference type="HOGENOM" id="CLU_003827_17_0_6"/>
<dbReference type="UniPathway" id="UPA00217"/>
<dbReference type="Proteomes" id="UP000000430">
    <property type="component" value="Chromosome"/>
</dbReference>
<dbReference type="GO" id="GO:0051537">
    <property type="term" value="F:2 iron, 2 sulfur cluster binding"/>
    <property type="evidence" value="ECO:0007669"/>
    <property type="project" value="UniProtKB-KW"/>
</dbReference>
<dbReference type="GO" id="GO:0046872">
    <property type="term" value="F:metal ion binding"/>
    <property type="evidence" value="ECO:0007669"/>
    <property type="project" value="UniProtKB-KW"/>
</dbReference>
<dbReference type="GO" id="GO:0016491">
    <property type="term" value="F:oxidoreductase activity"/>
    <property type="evidence" value="ECO:0007669"/>
    <property type="project" value="UniProtKB-KW"/>
</dbReference>
<dbReference type="GO" id="GO:0046274">
    <property type="term" value="P:lignin catabolic process"/>
    <property type="evidence" value="ECO:0007669"/>
    <property type="project" value="UniProtKB-KW"/>
</dbReference>
<dbReference type="CDD" id="cd00207">
    <property type="entry name" value="fer2"/>
    <property type="match status" value="1"/>
</dbReference>
<dbReference type="CDD" id="cd06185">
    <property type="entry name" value="PDR_like"/>
    <property type="match status" value="1"/>
</dbReference>
<dbReference type="Gene3D" id="3.10.20.30">
    <property type="match status" value="1"/>
</dbReference>
<dbReference type="Gene3D" id="3.40.50.80">
    <property type="entry name" value="Nucleotide-binding domain of ferredoxin-NADP reductase (FNR) module"/>
    <property type="match status" value="1"/>
</dbReference>
<dbReference type="Gene3D" id="2.40.30.10">
    <property type="entry name" value="Translation factors"/>
    <property type="match status" value="1"/>
</dbReference>
<dbReference type="InterPro" id="IPR036010">
    <property type="entry name" value="2Fe-2S_ferredoxin-like_sf"/>
</dbReference>
<dbReference type="InterPro" id="IPR001041">
    <property type="entry name" value="2Fe-2S_ferredoxin-type"/>
</dbReference>
<dbReference type="InterPro" id="IPR006058">
    <property type="entry name" value="2Fe2S_fd_BS"/>
</dbReference>
<dbReference type="InterPro" id="IPR012675">
    <property type="entry name" value="Beta-grasp_dom_sf"/>
</dbReference>
<dbReference type="InterPro" id="IPR054582">
    <property type="entry name" value="DmmA-like_N"/>
</dbReference>
<dbReference type="InterPro" id="IPR017927">
    <property type="entry name" value="FAD-bd_FR_type"/>
</dbReference>
<dbReference type="InterPro" id="IPR039261">
    <property type="entry name" value="FNR_nucleotide-bd"/>
</dbReference>
<dbReference type="InterPro" id="IPR050415">
    <property type="entry name" value="MRET"/>
</dbReference>
<dbReference type="InterPro" id="IPR017938">
    <property type="entry name" value="Riboflavin_synthase-like_b-brl"/>
</dbReference>
<dbReference type="PANTHER" id="PTHR47354:SF1">
    <property type="entry name" value="CARNITINE MONOOXYGENASE REDUCTASE SUBUNIT"/>
    <property type="match status" value="1"/>
</dbReference>
<dbReference type="PANTHER" id="PTHR47354">
    <property type="entry name" value="NADH OXIDOREDUCTASE HCR"/>
    <property type="match status" value="1"/>
</dbReference>
<dbReference type="Pfam" id="PF22290">
    <property type="entry name" value="DmmA-like_N"/>
    <property type="match status" value="1"/>
</dbReference>
<dbReference type="Pfam" id="PF00111">
    <property type="entry name" value="Fer2"/>
    <property type="match status" value="1"/>
</dbReference>
<dbReference type="PRINTS" id="PR00409">
    <property type="entry name" value="PHDIOXRDTASE"/>
</dbReference>
<dbReference type="SUPFAM" id="SSF54292">
    <property type="entry name" value="2Fe-2S ferredoxin-like"/>
    <property type="match status" value="1"/>
</dbReference>
<dbReference type="SUPFAM" id="SSF52343">
    <property type="entry name" value="Ferredoxin reductase-like, C-terminal NADP-linked domain"/>
    <property type="match status" value="1"/>
</dbReference>
<dbReference type="SUPFAM" id="SSF63380">
    <property type="entry name" value="Riboflavin synthase domain-like"/>
    <property type="match status" value="1"/>
</dbReference>
<dbReference type="PROSITE" id="PS00197">
    <property type="entry name" value="2FE2S_FER_1"/>
    <property type="match status" value="1"/>
</dbReference>
<dbReference type="PROSITE" id="PS51085">
    <property type="entry name" value="2FE2S_FER_2"/>
    <property type="match status" value="1"/>
</dbReference>
<dbReference type="PROSITE" id="PS51384">
    <property type="entry name" value="FAD_FR"/>
    <property type="match status" value="1"/>
</dbReference>
<organism>
    <name type="scientific">Acinetobacter baylyi (strain ATCC 33305 / BD413 / ADP1)</name>
    <dbReference type="NCBI Taxonomy" id="62977"/>
    <lineage>
        <taxon>Bacteria</taxon>
        <taxon>Pseudomonadati</taxon>
        <taxon>Pseudomonadota</taxon>
        <taxon>Gammaproteobacteria</taxon>
        <taxon>Moraxellales</taxon>
        <taxon>Moraxellaceae</taxon>
        <taxon>Acinetobacter</taxon>
    </lineage>
</organism>
<gene>
    <name type="primary">vanB</name>
    <name type="ordered locus">ACIAD0979</name>
</gene>
<protein>
    <recommendedName>
        <fullName>Vanillate O-demethylase oxidoreductase</fullName>
        <ecNumber>1.14.13.-</ecNumber>
    </recommendedName>
    <alternativeName>
        <fullName>Vanillate degradation ferredoxin-like protein</fullName>
    </alternativeName>
</protein>
<name>VANB_ACIAD</name>
<proteinExistence type="inferred from homology"/>